<gene>
    <name evidence="1" type="primary">lexA</name>
    <name type="ordered locus">BAV1503</name>
</gene>
<feature type="chain" id="PRO_1000001260" description="LexA repressor">
    <location>
        <begin position="1"/>
        <end position="213"/>
    </location>
</feature>
<feature type="DNA-binding region" description="H-T-H motif" evidence="1">
    <location>
        <begin position="29"/>
        <end position="49"/>
    </location>
</feature>
<feature type="active site" description="For autocatalytic cleavage activity" evidence="1">
    <location>
        <position position="131"/>
    </location>
</feature>
<feature type="active site" description="For autocatalytic cleavage activity" evidence="1">
    <location>
        <position position="168"/>
    </location>
</feature>
<feature type="site" description="Cleavage; by autolysis" evidence="1">
    <location>
        <begin position="96"/>
        <end position="97"/>
    </location>
</feature>
<protein>
    <recommendedName>
        <fullName evidence="1">LexA repressor</fullName>
        <ecNumber evidence="1">3.4.21.88</ecNumber>
    </recommendedName>
</protein>
<name>LEXA_BORA1</name>
<comment type="function">
    <text evidence="1">Represses a number of genes involved in the response to DNA damage (SOS response), including recA and lexA. In the presence of single-stranded DNA, RecA interacts with LexA causing an autocatalytic cleavage which disrupts the DNA-binding part of LexA, leading to derepression of the SOS regulon and eventually DNA repair.</text>
</comment>
<comment type="catalytic activity">
    <reaction evidence="1">
        <text>Hydrolysis of Ala-|-Gly bond in repressor LexA.</text>
        <dbReference type="EC" id="3.4.21.88"/>
    </reaction>
</comment>
<comment type="subunit">
    <text evidence="1">Homodimer.</text>
</comment>
<comment type="similarity">
    <text evidence="1">Belongs to the peptidase S24 family.</text>
</comment>
<dbReference type="EC" id="3.4.21.88" evidence="1"/>
<dbReference type="EMBL" id="AM167904">
    <property type="protein sequence ID" value="CAJ49116.1"/>
    <property type="molecule type" value="Genomic_DNA"/>
</dbReference>
<dbReference type="RefSeq" id="WP_012417180.1">
    <property type="nucleotide sequence ID" value="NC_010645.1"/>
</dbReference>
<dbReference type="SMR" id="Q2L247"/>
<dbReference type="STRING" id="360910.BAV1503"/>
<dbReference type="MEROPS" id="S24.001"/>
<dbReference type="KEGG" id="bav:BAV1503"/>
<dbReference type="eggNOG" id="COG1974">
    <property type="taxonomic scope" value="Bacteria"/>
</dbReference>
<dbReference type="HOGENOM" id="CLU_066192_45_3_4"/>
<dbReference type="OrthoDB" id="9802364at2"/>
<dbReference type="Proteomes" id="UP000001977">
    <property type="component" value="Chromosome"/>
</dbReference>
<dbReference type="GO" id="GO:0003677">
    <property type="term" value="F:DNA binding"/>
    <property type="evidence" value="ECO:0007669"/>
    <property type="project" value="UniProtKB-UniRule"/>
</dbReference>
<dbReference type="GO" id="GO:0004252">
    <property type="term" value="F:serine-type endopeptidase activity"/>
    <property type="evidence" value="ECO:0007669"/>
    <property type="project" value="UniProtKB-UniRule"/>
</dbReference>
<dbReference type="GO" id="GO:0006281">
    <property type="term" value="P:DNA repair"/>
    <property type="evidence" value="ECO:0007669"/>
    <property type="project" value="UniProtKB-UniRule"/>
</dbReference>
<dbReference type="GO" id="GO:0006260">
    <property type="term" value="P:DNA replication"/>
    <property type="evidence" value="ECO:0007669"/>
    <property type="project" value="UniProtKB-UniRule"/>
</dbReference>
<dbReference type="GO" id="GO:0045892">
    <property type="term" value="P:negative regulation of DNA-templated transcription"/>
    <property type="evidence" value="ECO:0007669"/>
    <property type="project" value="UniProtKB-UniRule"/>
</dbReference>
<dbReference type="GO" id="GO:0006508">
    <property type="term" value="P:proteolysis"/>
    <property type="evidence" value="ECO:0007669"/>
    <property type="project" value="InterPro"/>
</dbReference>
<dbReference type="GO" id="GO:0009432">
    <property type="term" value="P:SOS response"/>
    <property type="evidence" value="ECO:0007669"/>
    <property type="project" value="UniProtKB-UniRule"/>
</dbReference>
<dbReference type="CDD" id="cd06529">
    <property type="entry name" value="S24_LexA-like"/>
    <property type="match status" value="1"/>
</dbReference>
<dbReference type="FunFam" id="1.10.10.10:FF:000009">
    <property type="entry name" value="LexA repressor"/>
    <property type="match status" value="1"/>
</dbReference>
<dbReference type="FunFam" id="2.10.109.10:FF:000001">
    <property type="entry name" value="LexA repressor"/>
    <property type="match status" value="1"/>
</dbReference>
<dbReference type="Gene3D" id="2.10.109.10">
    <property type="entry name" value="Umud Fragment, subunit A"/>
    <property type="match status" value="1"/>
</dbReference>
<dbReference type="Gene3D" id="1.10.10.10">
    <property type="entry name" value="Winged helix-like DNA-binding domain superfamily/Winged helix DNA-binding domain"/>
    <property type="match status" value="1"/>
</dbReference>
<dbReference type="HAMAP" id="MF_00015">
    <property type="entry name" value="LexA"/>
    <property type="match status" value="1"/>
</dbReference>
<dbReference type="InterPro" id="IPR006200">
    <property type="entry name" value="LexA"/>
</dbReference>
<dbReference type="InterPro" id="IPR039418">
    <property type="entry name" value="LexA-like"/>
</dbReference>
<dbReference type="InterPro" id="IPR036286">
    <property type="entry name" value="LexA/Signal_pep-like_sf"/>
</dbReference>
<dbReference type="InterPro" id="IPR006199">
    <property type="entry name" value="LexA_DNA-bd_dom"/>
</dbReference>
<dbReference type="InterPro" id="IPR050077">
    <property type="entry name" value="LexA_repressor"/>
</dbReference>
<dbReference type="InterPro" id="IPR006197">
    <property type="entry name" value="Peptidase_S24_LexA"/>
</dbReference>
<dbReference type="InterPro" id="IPR015927">
    <property type="entry name" value="Peptidase_S24_S26A/B/C"/>
</dbReference>
<dbReference type="InterPro" id="IPR036388">
    <property type="entry name" value="WH-like_DNA-bd_sf"/>
</dbReference>
<dbReference type="InterPro" id="IPR036390">
    <property type="entry name" value="WH_DNA-bd_sf"/>
</dbReference>
<dbReference type="NCBIfam" id="TIGR00498">
    <property type="entry name" value="lexA"/>
    <property type="match status" value="1"/>
</dbReference>
<dbReference type="PANTHER" id="PTHR33516">
    <property type="entry name" value="LEXA REPRESSOR"/>
    <property type="match status" value="1"/>
</dbReference>
<dbReference type="PANTHER" id="PTHR33516:SF2">
    <property type="entry name" value="LEXA REPRESSOR-RELATED"/>
    <property type="match status" value="1"/>
</dbReference>
<dbReference type="Pfam" id="PF01726">
    <property type="entry name" value="LexA_DNA_bind"/>
    <property type="match status" value="1"/>
</dbReference>
<dbReference type="Pfam" id="PF00717">
    <property type="entry name" value="Peptidase_S24"/>
    <property type="match status" value="1"/>
</dbReference>
<dbReference type="PRINTS" id="PR00726">
    <property type="entry name" value="LEXASERPTASE"/>
</dbReference>
<dbReference type="SUPFAM" id="SSF51306">
    <property type="entry name" value="LexA/Signal peptidase"/>
    <property type="match status" value="1"/>
</dbReference>
<dbReference type="SUPFAM" id="SSF46785">
    <property type="entry name" value="Winged helix' DNA-binding domain"/>
    <property type="match status" value="1"/>
</dbReference>
<keyword id="KW-0068">Autocatalytic cleavage</keyword>
<keyword id="KW-0227">DNA damage</keyword>
<keyword id="KW-0234">DNA repair</keyword>
<keyword id="KW-0235">DNA replication</keyword>
<keyword id="KW-0238">DNA-binding</keyword>
<keyword id="KW-0378">Hydrolase</keyword>
<keyword id="KW-1185">Reference proteome</keyword>
<keyword id="KW-0678">Repressor</keyword>
<keyword id="KW-0742">SOS response</keyword>
<keyword id="KW-0804">Transcription</keyword>
<keyword id="KW-0805">Transcription regulation</keyword>
<proteinExistence type="inferred from homology"/>
<reference key="1">
    <citation type="journal article" date="2006" name="J. Bacteriol.">
        <title>Comparison of the genome sequence of the poultry pathogen Bordetella avium with those of B. bronchiseptica, B. pertussis, and B. parapertussis reveals extensive diversity in surface structures associated with host interaction.</title>
        <authorList>
            <person name="Sebaihia M."/>
            <person name="Preston A."/>
            <person name="Maskell D.J."/>
            <person name="Kuzmiak H."/>
            <person name="Connell T.D."/>
            <person name="King N.D."/>
            <person name="Orndorff P.E."/>
            <person name="Miyamoto D.M."/>
            <person name="Thomson N.R."/>
            <person name="Harris D."/>
            <person name="Goble A."/>
            <person name="Lord A."/>
            <person name="Murphy L."/>
            <person name="Quail M.A."/>
            <person name="Rutter S."/>
            <person name="Squares R."/>
            <person name="Squares S."/>
            <person name="Woodward J."/>
            <person name="Parkhill J."/>
            <person name="Temple L.M."/>
        </authorList>
    </citation>
    <scope>NUCLEOTIDE SEQUENCE [LARGE SCALE GENOMIC DNA]</scope>
    <source>
        <strain>197N</strain>
    </source>
</reference>
<organism>
    <name type="scientific">Bordetella avium (strain 197N)</name>
    <dbReference type="NCBI Taxonomy" id="360910"/>
    <lineage>
        <taxon>Bacteria</taxon>
        <taxon>Pseudomonadati</taxon>
        <taxon>Pseudomonadota</taxon>
        <taxon>Betaproteobacteria</taxon>
        <taxon>Burkholderiales</taxon>
        <taxon>Alcaligenaceae</taxon>
        <taxon>Bordetella</taxon>
    </lineage>
</organism>
<accession>Q2L247</accession>
<evidence type="ECO:0000255" key="1">
    <source>
        <dbReference type="HAMAP-Rule" id="MF_00015"/>
    </source>
</evidence>
<sequence length="213" mass="22906">MATKLTERQQEILDLIRQTVARTGFPPTRAEIAQALGFRSPNAAEDHLKALARKGAIELTAGASRGIRLKDAEPTPSPILASLSQLLLPLVGRVAAGSPILAAEHVEREVGVDPSLFSQAPDYLLKVRGMSMRDAGILEGDLLAVKKSSEARNGQIIVARLGDDVTVKRLQRHGSRIELLPENPEFSPILVAPDDEFALEGVAVGLIRTHALH</sequence>